<protein>
    <recommendedName>
        <fullName evidence="1">Small ribosomal subunit protein uS17</fullName>
    </recommendedName>
    <alternativeName>
        <fullName evidence="2">30S ribosomal protein S17</fullName>
    </alternativeName>
</protein>
<organism>
    <name type="scientific">Kosmotoga olearia (strain ATCC BAA-1733 / DSM 21960 / TBF 19.5.1)</name>
    <dbReference type="NCBI Taxonomy" id="521045"/>
    <lineage>
        <taxon>Bacteria</taxon>
        <taxon>Thermotogati</taxon>
        <taxon>Thermotogota</taxon>
        <taxon>Thermotogae</taxon>
        <taxon>Kosmotogales</taxon>
        <taxon>Kosmotogaceae</taxon>
        <taxon>Kosmotoga</taxon>
    </lineage>
</organism>
<reference key="1">
    <citation type="submission" date="2009-06" db="EMBL/GenBank/DDBJ databases">
        <title>Complete sequence of Thermotogales bacterium TBF 19.5.1.</title>
        <authorList>
            <consortium name="US DOE Joint Genome Institute"/>
            <person name="Lucas S."/>
            <person name="Copeland A."/>
            <person name="Lapidus A."/>
            <person name="Glavina del Rio T."/>
            <person name="Tice H."/>
            <person name="Bruce D."/>
            <person name="Goodwin L."/>
            <person name="Pitluck S."/>
            <person name="Chertkov O."/>
            <person name="Brettin T."/>
            <person name="Detter J.C."/>
            <person name="Han C."/>
            <person name="Schmutz J."/>
            <person name="Larimer F."/>
            <person name="Land M."/>
            <person name="Hauser L."/>
            <person name="Kyrpides N."/>
            <person name="Ovchinnikova G."/>
            <person name="Noll K."/>
        </authorList>
    </citation>
    <scope>NUCLEOTIDE SEQUENCE [LARGE SCALE GENOMIC DNA]</scope>
    <source>
        <strain>ATCC BAA-1733 / DSM 21960 / TBF 19.5.1</strain>
    </source>
</reference>
<comment type="function">
    <text evidence="1">One of the primary rRNA binding proteins, it binds specifically to the 5'-end of 16S ribosomal RNA.</text>
</comment>
<comment type="subunit">
    <text evidence="1">Part of the 30S ribosomal subunit.</text>
</comment>
<comment type="similarity">
    <text evidence="1">Belongs to the universal ribosomal protein uS17 family.</text>
</comment>
<evidence type="ECO:0000255" key="1">
    <source>
        <dbReference type="HAMAP-Rule" id="MF_01345"/>
    </source>
</evidence>
<evidence type="ECO:0000305" key="2"/>
<keyword id="KW-1185">Reference proteome</keyword>
<keyword id="KW-0687">Ribonucleoprotein</keyword>
<keyword id="KW-0689">Ribosomal protein</keyword>
<keyword id="KW-0694">RNA-binding</keyword>
<keyword id="KW-0699">rRNA-binding</keyword>
<proteinExistence type="inferred from homology"/>
<name>RS17_KOSOT</name>
<dbReference type="EMBL" id="CP001634">
    <property type="protein sequence ID" value="ACR80574.1"/>
    <property type="molecule type" value="Genomic_DNA"/>
</dbReference>
<dbReference type="RefSeq" id="WP_015869217.1">
    <property type="nucleotide sequence ID" value="NC_012785.1"/>
</dbReference>
<dbReference type="SMR" id="C5CGQ5"/>
<dbReference type="STRING" id="521045.Kole_1893"/>
<dbReference type="KEGG" id="kol:Kole_1893"/>
<dbReference type="eggNOG" id="COG0186">
    <property type="taxonomic scope" value="Bacteria"/>
</dbReference>
<dbReference type="HOGENOM" id="CLU_073626_1_2_0"/>
<dbReference type="OrthoDB" id="9811714at2"/>
<dbReference type="Proteomes" id="UP000002382">
    <property type="component" value="Chromosome"/>
</dbReference>
<dbReference type="GO" id="GO:0022627">
    <property type="term" value="C:cytosolic small ribosomal subunit"/>
    <property type="evidence" value="ECO:0007669"/>
    <property type="project" value="TreeGrafter"/>
</dbReference>
<dbReference type="GO" id="GO:0019843">
    <property type="term" value="F:rRNA binding"/>
    <property type="evidence" value="ECO:0007669"/>
    <property type="project" value="UniProtKB-UniRule"/>
</dbReference>
<dbReference type="GO" id="GO:0003735">
    <property type="term" value="F:structural constituent of ribosome"/>
    <property type="evidence" value="ECO:0007669"/>
    <property type="project" value="InterPro"/>
</dbReference>
<dbReference type="GO" id="GO:0006412">
    <property type="term" value="P:translation"/>
    <property type="evidence" value="ECO:0007669"/>
    <property type="project" value="UniProtKB-UniRule"/>
</dbReference>
<dbReference type="CDD" id="cd00364">
    <property type="entry name" value="Ribosomal_uS17"/>
    <property type="match status" value="1"/>
</dbReference>
<dbReference type="FunFam" id="2.40.50.140:FF:000204">
    <property type="entry name" value="30S ribosomal protein S17"/>
    <property type="match status" value="1"/>
</dbReference>
<dbReference type="Gene3D" id="2.40.50.140">
    <property type="entry name" value="Nucleic acid-binding proteins"/>
    <property type="match status" value="1"/>
</dbReference>
<dbReference type="HAMAP" id="MF_01345_B">
    <property type="entry name" value="Ribosomal_uS17_B"/>
    <property type="match status" value="1"/>
</dbReference>
<dbReference type="InterPro" id="IPR012340">
    <property type="entry name" value="NA-bd_OB-fold"/>
</dbReference>
<dbReference type="InterPro" id="IPR000266">
    <property type="entry name" value="Ribosomal_uS17"/>
</dbReference>
<dbReference type="InterPro" id="IPR019984">
    <property type="entry name" value="Ribosomal_uS17_bact/chlr"/>
</dbReference>
<dbReference type="InterPro" id="IPR019979">
    <property type="entry name" value="Ribosomal_uS17_CS"/>
</dbReference>
<dbReference type="NCBIfam" id="NF004123">
    <property type="entry name" value="PRK05610.1"/>
    <property type="match status" value="1"/>
</dbReference>
<dbReference type="NCBIfam" id="TIGR03635">
    <property type="entry name" value="uS17_bact"/>
    <property type="match status" value="1"/>
</dbReference>
<dbReference type="PANTHER" id="PTHR10744">
    <property type="entry name" value="40S RIBOSOMAL PROTEIN S11 FAMILY MEMBER"/>
    <property type="match status" value="1"/>
</dbReference>
<dbReference type="PANTHER" id="PTHR10744:SF1">
    <property type="entry name" value="SMALL RIBOSOMAL SUBUNIT PROTEIN US17M"/>
    <property type="match status" value="1"/>
</dbReference>
<dbReference type="Pfam" id="PF00366">
    <property type="entry name" value="Ribosomal_S17"/>
    <property type="match status" value="1"/>
</dbReference>
<dbReference type="PRINTS" id="PR00973">
    <property type="entry name" value="RIBOSOMALS17"/>
</dbReference>
<dbReference type="SUPFAM" id="SSF50249">
    <property type="entry name" value="Nucleic acid-binding proteins"/>
    <property type="match status" value="1"/>
</dbReference>
<dbReference type="PROSITE" id="PS00056">
    <property type="entry name" value="RIBOSOMAL_S17"/>
    <property type="match status" value="1"/>
</dbReference>
<accession>C5CGQ5</accession>
<feature type="chain" id="PRO_1000214789" description="Small ribosomal subunit protein uS17">
    <location>
        <begin position="1"/>
        <end position="101"/>
    </location>
</feature>
<gene>
    <name evidence="1" type="primary">rpsQ</name>
    <name type="ordered locus">Kole_1893</name>
</gene>
<sequence length="101" mass="11571">MPRKKLVGTVVSNKMDKTVVVRVERTFAHPLYKKTVKRAKKYHAHDEDNSCGIGDIVEIEECRPLSKTKKFKVVRIVKKSVFGEEKLETPENVEMLGGEEK</sequence>